<keyword id="KW-0963">Cytoplasm</keyword>
<keyword id="KW-1185">Reference proteome</keyword>
<feature type="chain" id="PRO_0000162462" description="Regulatory protein RecX">
    <location>
        <begin position="1"/>
        <end position="155"/>
    </location>
</feature>
<organism>
    <name type="scientific">Pseudomonas syringae pv. tomato (strain ATCC BAA-871 / DC3000)</name>
    <dbReference type="NCBI Taxonomy" id="223283"/>
    <lineage>
        <taxon>Bacteria</taxon>
        <taxon>Pseudomonadati</taxon>
        <taxon>Pseudomonadota</taxon>
        <taxon>Gammaproteobacteria</taxon>
        <taxon>Pseudomonadales</taxon>
        <taxon>Pseudomonadaceae</taxon>
        <taxon>Pseudomonas</taxon>
    </lineage>
</organism>
<sequence>MPAVLDTPVAIRRTAMDLLARREHGRVELTRKLRQRGAPPELIEAALDRLVEEGLLSESRYLESFVSYRARSGYGPARIREELNQRGLQRADVERALKECGVNWQEKLQEVWQRKFAGELPVDARERARQGRFLSYRGYPLDMIGRLLSGRGGDD</sequence>
<protein>
    <recommendedName>
        <fullName evidence="1">Regulatory protein RecX</fullName>
    </recommendedName>
</protein>
<accession>Q87XY8</accession>
<gene>
    <name evidence="1" type="primary">recX</name>
    <name type="ordered locus">PSPTO_4032</name>
</gene>
<comment type="function">
    <text evidence="1">Modulates RecA activity.</text>
</comment>
<comment type="subcellular location">
    <subcellularLocation>
        <location evidence="1">Cytoplasm</location>
    </subcellularLocation>
</comment>
<comment type="similarity">
    <text evidence="1">Belongs to the RecX family.</text>
</comment>
<comment type="sequence caution" evidence="2">
    <conflict type="erroneous initiation">
        <sequence resource="EMBL-CDS" id="AAO57489"/>
    </conflict>
</comment>
<evidence type="ECO:0000255" key="1">
    <source>
        <dbReference type="HAMAP-Rule" id="MF_01114"/>
    </source>
</evidence>
<evidence type="ECO:0000305" key="2"/>
<reference key="1">
    <citation type="journal article" date="2003" name="Proc. Natl. Acad. Sci. U.S.A.">
        <title>The complete genome sequence of the Arabidopsis and tomato pathogen Pseudomonas syringae pv. tomato DC3000.</title>
        <authorList>
            <person name="Buell C.R."/>
            <person name="Joardar V."/>
            <person name="Lindeberg M."/>
            <person name="Selengut J."/>
            <person name="Paulsen I.T."/>
            <person name="Gwinn M.L."/>
            <person name="Dodson R.J."/>
            <person name="DeBoy R.T."/>
            <person name="Durkin A.S."/>
            <person name="Kolonay J.F."/>
            <person name="Madupu R."/>
            <person name="Daugherty S.C."/>
            <person name="Brinkac L.M."/>
            <person name="Beanan M.J."/>
            <person name="Haft D.H."/>
            <person name="Nelson W.C."/>
            <person name="Davidsen T.M."/>
            <person name="Zafar N."/>
            <person name="Zhou L."/>
            <person name="Liu J."/>
            <person name="Yuan Q."/>
            <person name="Khouri H.M."/>
            <person name="Fedorova N.B."/>
            <person name="Tran B."/>
            <person name="Russell D."/>
            <person name="Berry K.J."/>
            <person name="Utterback T.R."/>
            <person name="Van Aken S.E."/>
            <person name="Feldblyum T.V."/>
            <person name="D'Ascenzo M."/>
            <person name="Deng W.-L."/>
            <person name="Ramos A.R."/>
            <person name="Alfano J.R."/>
            <person name="Cartinhour S."/>
            <person name="Chatterjee A.K."/>
            <person name="Delaney T.P."/>
            <person name="Lazarowitz S.G."/>
            <person name="Martin G.B."/>
            <person name="Schneider D.J."/>
            <person name="Tang X."/>
            <person name="Bender C.L."/>
            <person name="White O."/>
            <person name="Fraser C.M."/>
            <person name="Collmer A."/>
        </authorList>
    </citation>
    <scope>NUCLEOTIDE SEQUENCE [LARGE SCALE GENOMIC DNA]</scope>
    <source>
        <strain>ATCC BAA-871 / DC3000</strain>
    </source>
</reference>
<dbReference type="EMBL" id="AE016853">
    <property type="protein sequence ID" value="AAO57489.1"/>
    <property type="status" value="ALT_INIT"/>
    <property type="molecule type" value="Genomic_DNA"/>
</dbReference>
<dbReference type="RefSeq" id="NP_793794.1">
    <property type="nucleotide sequence ID" value="NC_004578.1"/>
</dbReference>
<dbReference type="RefSeq" id="WP_005766020.1">
    <property type="nucleotide sequence ID" value="NC_004578.1"/>
</dbReference>
<dbReference type="SMR" id="Q87XY8"/>
<dbReference type="STRING" id="223283.PSPTO_4032"/>
<dbReference type="GeneID" id="1185711"/>
<dbReference type="KEGG" id="pst:PSPTO_4032"/>
<dbReference type="PATRIC" id="fig|223283.9.peg.4135"/>
<dbReference type="eggNOG" id="COG2137">
    <property type="taxonomic scope" value="Bacteria"/>
</dbReference>
<dbReference type="HOGENOM" id="CLU_066607_3_2_6"/>
<dbReference type="OrthoDB" id="7066780at2"/>
<dbReference type="Proteomes" id="UP000002515">
    <property type="component" value="Chromosome"/>
</dbReference>
<dbReference type="GO" id="GO:0005737">
    <property type="term" value="C:cytoplasm"/>
    <property type="evidence" value="ECO:0007669"/>
    <property type="project" value="UniProtKB-SubCell"/>
</dbReference>
<dbReference type="GO" id="GO:0006282">
    <property type="term" value="P:regulation of DNA repair"/>
    <property type="evidence" value="ECO:0007669"/>
    <property type="project" value="UniProtKB-UniRule"/>
</dbReference>
<dbReference type="Gene3D" id="1.10.10.10">
    <property type="entry name" value="Winged helix-like DNA-binding domain superfamily/Winged helix DNA-binding domain"/>
    <property type="match status" value="3"/>
</dbReference>
<dbReference type="HAMAP" id="MF_01114">
    <property type="entry name" value="RecX"/>
    <property type="match status" value="1"/>
</dbReference>
<dbReference type="InterPro" id="IPR053926">
    <property type="entry name" value="RecX_HTH_1st"/>
</dbReference>
<dbReference type="InterPro" id="IPR053924">
    <property type="entry name" value="RecX_HTH_2nd"/>
</dbReference>
<dbReference type="InterPro" id="IPR053925">
    <property type="entry name" value="RecX_HTH_3rd"/>
</dbReference>
<dbReference type="InterPro" id="IPR003783">
    <property type="entry name" value="Regulatory_RecX"/>
</dbReference>
<dbReference type="InterPro" id="IPR036388">
    <property type="entry name" value="WH-like_DNA-bd_sf"/>
</dbReference>
<dbReference type="NCBIfam" id="NF001054">
    <property type="entry name" value="PRK00117.2-1"/>
    <property type="match status" value="1"/>
</dbReference>
<dbReference type="PANTHER" id="PTHR33602">
    <property type="entry name" value="REGULATORY PROTEIN RECX FAMILY PROTEIN"/>
    <property type="match status" value="1"/>
</dbReference>
<dbReference type="PANTHER" id="PTHR33602:SF1">
    <property type="entry name" value="REGULATORY PROTEIN RECX FAMILY PROTEIN"/>
    <property type="match status" value="1"/>
</dbReference>
<dbReference type="Pfam" id="PF21982">
    <property type="entry name" value="RecX_HTH1"/>
    <property type="match status" value="1"/>
</dbReference>
<dbReference type="Pfam" id="PF02631">
    <property type="entry name" value="RecX_HTH2"/>
    <property type="match status" value="1"/>
</dbReference>
<dbReference type="Pfam" id="PF21981">
    <property type="entry name" value="RecX_HTH3"/>
    <property type="match status" value="1"/>
</dbReference>
<proteinExistence type="inferred from homology"/>
<name>RECX_PSESM</name>